<proteinExistence type="inferred from homology"/>
<feature type="chain" id="PRO_0000194440" description="Pantothenate kinase">
    <location>
        <begin position="1"/>
        <end position="312"/>
    </location>
</feature>
<feature type="binding site" evidence="2">
    <location>
        <begin position="97"/>
        <end position="104"/>
    </location>
    <ligand>
        <name>ATP</name>
        <dbReference type="ChEBI" id="CHEBI:30616"/>
    </ligand>
</feature>
<evidence type="ECO:0000250" key="1"/>
<evidence type="ECO:0000255" key="2"/>
<evidence type="ECO:0000305" key="3"/>
<reference key="1">
    <citation type="journal article" date="2003" name="Proc. Natl. Acad. Sci. U.S.A.">
        <title>The complete genome sequence of Mycobacterium bovis.</title>
        <authorList>
            <person name="Garnier T."/>
            <person name="Eiglmeier K."/>
            <person name="Camus J.-C."/>
            <person name="Medina N."/>
            <person name="Mansoor H."/>
            <person name="Pryor M."/>
            <person name="Duthoy S."/>
            <person name="Grondin S."/>
            <person name="Lacroix C."/>
            <person name="Monsempe C."/>
            <person name="Simon S."/>
            <person name="Harris B."/>
            <person name="Atkin R."/>
            <person name="Doggett J."/>
            <person name="Mayes R."/>
            <person name="Keating L."/>
            <person name="Wheeler P.R."/>
            <person name="Parkhill J."/>
            <person name="Barrell B.G."/>
            <person name="Cole S.T."/>
            <person name="Gordon S.V."/>
            <person name="Hewinson R.G."/>
        </authorList>
    </citation>
    <scope>NUCLEOTIDE SEQUENCE [LARGE SCALE GENOMIC DNA]</scope>
    <source>
        <strain>ATCC BAA-935 / AF2122/97</strain>
    </source>
</reference>
<reference key="2">
    <citation type="journal article" date="2017" name="Genome Announc.">
        <title>Updated reference genome sequence and annotation of Mycobacterium bovis AF2122/97.</title>
        <authorList>
            <person name="Malone K.M."/>
            <person name="Farrell D."/>
            <person name="Stuber T.P."/>
            <person name="Schubert O.T."/>
            <person name="Aebersold R."/>
            <person name="Robbe-Austerman S."/>
            <person name="Gordon S.V."/>
        </authorList>
    </citation>
    <scope>NUCLEOTIDE SEQUENCE [LARGE SCALE GENOMIC DNA]</scope>
    <scope>GENOME REANNOTATION</scope>
    <source>
        <strain>ATCC BAA-935 / AF2122/97</strain>
    </source>
</reference>
<accession>P63811</accession>
<accession>A0A1R3XZF8</accession>
<accession>O53440</accession>
<accession>X2BGW8</accession>
<sequence length="312" mass="35657">MSRLSEPSPYVEFDRRQWRALRMSTPLALTEEELVGLRGLGEQIDLLEVEEVYLPLARLIHLQVAARQRLFAATAEFLGEPQQNPDRPVPFIIGVAGSVAVGKSTTARVLQALLARWDHHPRVDLVTTDGFLYPNAELQRRNLMHRKGFPESYNRRALMRFVTSVKSGSDYACAPVYSHLHYDIIPGAEQVVRHPDILILEGLNVLQTGPTLMVSDLFDFSLYVDARIEDIEQWYVSRFLAMRTTAFADPESHFHHYAAFSDSQAVVAAREIWRTINRPNLVENILPTRPRATLVLRKDADHSINRLRLRKL</sequence>
<protein>
    <recommendedName>
        <fullName>Pantothenate kinase</fullName>
        <ecNumber>2.7.1.33</ecNumber>
    </recommendedName>
    <alternativeName>
        <fullName>Pantothenic acid kinase</fullName>
    </alternativeName>
</protein>
<organism>
    <name type="scientific">Mycobacterium bovis (strain ATCC BAA-935 / AF2122/97)</name>
    <dbReference type="NCBI Taxonomy" id="233413"/>
    <lineage>
        <taxon>Bacteria</taxon>
        <taxon>Bacillati</taxon>
        <taxon>Actinomycetota</taxon>
        <taxon>Actinomycetes</taxon>
        <taxon>Mycobacteriales</taxon>
        <taxon>Mycobacteriaceae</taxon>
        <taxon>Mycobacterium</taxon>
        <taxon>Mycobacterium tuberculosis complex</taxon>
    </lineage>
</organism>
<keyword id="KW-0067">ATP-binding</keyword>
<keyword id="KW-0173">Coenzyme A biosynthesis</keyword>
<keyword id="KW-0963">Cytoplasm</keyword>
<keyword id="KW-0418">Kinase</keyword>
<keyword id="KW-0547">Nucleotide-binding</keyword>
<keyword id="KW-1185">Reference proteome</keyword>
<keyword id="KW-0808">Transferase</keyword>
<dbReference type="EC" id="2.7.1.33"/>
<dbReference type="EMBL" id="LT708304">
    <property type="protein sequence ID" value="SIT99722.1"/>
    <property type="molecule type" value="Genomic_DNA"/>
</dbReference>
<dbReference type="RefSeq" id="NP_854778.1">
    <property type="nucleotide sequence ID" value="NC_002945.3"/>
</dbReference>
<dbReference type="RefSeq" id="WP_003405790.1">
    <property type="nucleotide sequence ID" value="NC_002945.4"/>
</dbReference>
<dbReference type="SMR" id="P63811"/>
<dbReference type="GeneID" id="45425066"/>
<dbReference type="KEGG" id="mbo:BQ2027_MB1122C"/>
<dbReference type="PATRIC" id="fig|233413.5.peg.1228"/>
<dbReference type="UniPathway" id="UPA00241">
    <property type="reaction ID" value="UER00352"/>
</dbReference>
<dbReference type="Proteomes" id="UP000001419">
    <property type="component" value="Chromosome"/>
</dbReference>
<dbReference type="GO" id="GO:0005737">
    <property type="term" value="C:cytoplasm"/>
    <property type="evidence" value="ECO:0007669"/>
    <property type="project" value="UniProtKB-SubCell"/>
</dbReference>
<dbReference type="GO" id="GO:0005524">
    <property type="term" value="F:ATP binding"/>
    <property type="evidence" value="ECO:0007669"/>
    <property type="project" value="UniProtKB-UniRule"/>
</dbReference>
<dbReference type="GO" id="GO:0004594">
    <property type="term" value="F:pantothenate kinase activity"/>
    <property type="evidence" value="ECO:0007669"/>
    <property type="project" value="UniProtKB-UniRule"/>
</dbReference>
<dbReference type="GO" id="GO:0015937">
    <property type="term" value="P:coenzyme A biosynthetic process"/>
    <property type="evidence" value="ECO:0007669"/>
    <property type="project" value="UniProtKB-UniRule"/>
</dbReference>
<dbReference type="CDD" id="cd02025">
    <property type="entry name" value="PanK"/>
    <property type="match status" value="1"/>
</dbReference>
<dbReference type="FunFam" id="3.40.50.300:FF:000242">
    <property type="entry name" value="Pantothenate kinase"/>
    <property type="match status" value="1"/>
</dbReference>
<dbReference type="Gene3D" id="3.40.50.300">
    <property type="entry name" value="P-loop containing nucleotide triphosphate hydrolases"/>
    <property type="match status" value="1"/>
</dbReference>
<dbReference type="HAMAP" id="MF_00215">
    <property type="entry name" value="Pantothen_kinase_1"/>
    <property type="match status" value="1"/>
</dbReference>
<dbReference type="InterPro" id="IPR027417">
    <property type="entry name" value="P-loop_NTPase"/>
</dbReference>
<dbReference type="InterPro" id="IPR004566">
    <property type="entry name" value="PanK"/>
</dbReference>
<dbReference type="InterPro" id="IPR006083">
    <property type="entry name" value="PRK/URK"/>
</dbReference>
<dbReference type="NCBIfam" id="TIGR00554">
    <property type="entry name" value="panK_bact"/>
    <property type="match status" value="1"/>
</dbReference>
<dbReference type="PANTHER" id="PTHR10285">
    <property type="entry name" value="URIDINE KINASE"/>
    <property type="match status" value="1"/>
</dbReference>
<dbReference type="Pfam" id="PF00485">
    <property type="entry name" value="PRK"/>
    <property type="match status" value="1"/>
</dbReference>
<dbReference type="PIRSF" id="PIRSF000545">
    <property type="entry name" value="Pantothenate_kin"/>
    <property type="match status" value="1"/>
</dbReference>
<dbReference type="SUPFAM" id="SSF52540">
    <property type="entry name" value="P-loop containing nucleoside triphosphate hydrolases"/>
    <property type="match status" value="1"/>
</dbReference>
<name>COAA_MYCBO</name>
<gene>
    <name type="primary">coaA</name>
    <name type="ordered locus">BQ2027_MB1122C</name>
</gene>
<comment type="catalytic activity">
    <reaction>
        <text>(R)-pantothenate + ATP = (R)-4'-phosphopantothenate + ADP + H(+)</text>
        <dbReference type="Rhea" id="RHEA:16373"/>
        <dbReference type="ChEBI" id="CHEBI:10986"/>
        <dbReference type="ChEBI" id="CHEBI:15378"/>
        <dbReference type="ChEBI" id="CHEBI:29032"/>
        <dbReference type="ChEBI" id="CHEBI:30616"/>
        <dbReference type="ChEBI" id="CHEBI:456216"/>
        <dbReference type="EC" id="2.7.1.33"/>
    </reaction>
</comment>
<comment type="pathway">
    <text>Cofactor biosynthesis; coenzyme A biosynthesis; CoA from (R)-pantothenate: step 1/5.</text>
</comment>
<comment type="subcellular location">
    <subcellularLocation>
        <location evidence="1">Cytoplasm</location>
    </subcellularLocation>
</comment>
<comment type="similarity">
    <text evidence="3">Belongs to the prokaryotic pantothenate kinase family.</text>
</comment>